<comment type="catalytic activity">
    <reaction evidence="1 2">
        <text>urea + 2 H2O + H(+) = hydrogencarbonate + 2 NH4(+)</text>
        <dbReference type="Rhea" id="RHEA:20557"/>
        <dbReference type="ChEBI" id="CHEBI:15377"/>
        <dbReference type="ChEBI" id="CHEBI:15378"/>
        <dbReference type="ChEBI" id="CHEBI:16199"/>
        <dbReference type="ChEBI" id="CHEBI:17544"/>
        <dbReference type="ChEBI" id="CHEBI:28938"/>
        <dbReference type="EC" id="3.5.1.5"/>
    </reaction>
</comment>
<comment type="activity regulation">
    <text evidence="2">Inhibited by HgCl2 and acetohydroxyamic acid slightly by EDTA, but not by boric acid or L-methionine-DL-sulfoximine.</text>
</comment>
<comment type="biophysicochemical properties">
    <kinetics>
        <KM evidence="2">0.23 mM for urea</KM>
        <Vmax evidence="2">0.095 mmol/min/mg enzyme</Vmax>
    </kinetics>
    <temperatureDependence>
        <text evidence="2">Optimum temperature is 55 degrees Celsius.</text>
    </temperatureDependence>
</comment>
<comment type="pathway">
    <text evidence="1">Nitrogen metabolism; urea degradation; CO(2) and NH(3) from urea (urease route): step 1/1.</text>
</comment>
<comment type="subunit">
    <text evidence="2">Heterotrimer of UreA (gamma), UreB (beta) and UreC (alpha) subunits. Two heterotrimers associate to form the active enzyme. In most bacteria it is thought that three heterotrimers form the active enzyme.</text>
</comment>
<comment type="subcellular location">
    <subcellularLocation>
        <location evidence="1">Cytoplasm</location>
    </subcellularLocation>
</comment>
<comment type="similarity">
    <text evidence="1">Belongs to the urease gamma subunit family.</text>
</comment>
<evidence type="ECO:0000255" key="1">
    <source>
        <dbReference type="HAMAP-Rule" id="MF_00739"/>
    </source>
</evidence>
<evidence type="ECO:0000269" key="2">
    <source>
    </source>
</evidence>
<keyword id="KW-0963">Cytoplasm</keyword>
<keyword id="KW-0378">Hydrolase</keyword>
<proteinExistence type="evidence at protein level"/>
<name>URE3_PROS9</name>
<sequence length="100" mass="11173">MHLSPQEKDKLLIFSAAQLAERRLNRGLKLNYPETVAFLSFQVLEGARDGKSVSQLMSEGTTWLSKKQVMDGISEMVDEVQVEAVFPDGTKLVTIHNPIN</sequence>
<dbReference type="EC" id="3.5.1.5" evidence="1"/>
<dbReference type="EMBL" id="AF242489">
    <property type="protein sequence ID" value="AAF70250.1"/>
    <property type="molecule type" value="Genomic_DNA"/>
</dbReference>
<dbReference type="SMR" id="Q9L642"/>
<dbReference type="UniPathway" id="UPA00258">
    <property type="reaction ID" value="UER00370"/>
</dbReference>
<dbReference type="GO" id="GO:0005737">
    <property type="term" value="C:cytoplasm"/>
    <property type="evidence" value="ECO:0007669"/>
    <property type="project" value="UniProtKB-SubCell"/>
</dbReference>
<dbReference type="GO" id="GO:0016151">
    <property type="term" value="F:nickel cation binding"/>
    <property type="evidence" value="ECO:0007669"/>
    <property type="project" value="InterPro"/>
</dbReference>
<dbReference type="GO" id="GO:0009039">
    <property type="term" value="F:urease activity"/>
    <property type="evidence" value="ECO:0007669"/>
    <property type="project" value="UniProtKB-UniRule"/>
</dbReference>
<dbReference type="GO" id="GO:0043419">
    <property type="term" value="P:urea catabolic process"/>
    <property type="evidence" value="ECO:0007669"/>
    <property type="project" value="UniProtKB-UniRule"/>
</dbReference>
<dbReference type="CDD" id="cd00390">
    <property type="entry name" value="Urease_gamma"/>
    <property type="match status" value="1"/>
</dbReference>
<dbReference type="Gene3D" id="3.30.280.10">
    <property type="entry name" value="Urease, gamma-like subunit"/>
    <property type="match status" value="1"/>
</dbReference>
<dbReference type="HAMAP" id="MF_00739">
    <property type="entry name" value="Urease_gamma"/>
    <property type="match status" value="1"/>
</dbReference>
<dbReference type="InterPro" id="IPR012010">
    <property type="entry name" value="Urease_gamma"/>
</dbReference>
<dbReference type="InterPro" id="IPR002026">
    <property type="entry name" value="Urease_gamma/gamma-beta_su"/>
</dbReference>
<dbReference type="InterPro" id="IPR036463">
    <property type="entry name" value="Urease_gamma_sf"/>
</dbReference>
<dbReference type="InterPro" id="IPR050069">
    <property type="entry name" value="Urease_subunit"/>
</dbReference>
<dbReference type="NCBIfam" id="NF009712">
    <property type="entry name" value="PRK13241.1"/>
    <property type="match status" value="1"/>
</dbReference>
<dbReference type="NCBIfam" id="TIGR00193">
    <property type="entry name" value="urease_gam"/>
    <property type="match status" value="1"/>
</dbReference>
<dbReference type="PANTHER" id="PTHR33569">
    <property type="entry name" value="UREASE"/>
    <property type="match status" value="1"/>
</dbReference>
<dbReference type="PANTHER" id="PTHR33569:SF1">
    <property type="entry name" value="UREASE"/>
    <property type="match status" value="1"/>
</dbReference>
<dbReference type="Pfam" id="PF00547">
    <property type="entry name" value="Urease_gamma"/>
    <property type="match status" value="1"/>
</dbReference>
<dbReference type="PIRSF" id="PIRSF001223">
    <property type="entry name" value="Urease_gamma"/>
    <property type="match status" value="1"/>
</dbReference>
<dbReference type="SUPFAM" id="SSF54111">
    <property type="entry name" value="Urease, gamma-subunit"/>
    <property type="match status" value="1"/>
</dbReference>
<organism>
    <name type="scientific">Prochlorococcus marinus subsp. pastoris (strain PCC 9511)</name>
    <dbReference type="NCBI Taxonomy" id="100363"/>
    <lineage>
        <taxon>Bacteria</taxon>
        <taxon>Bacillati</taxon>
        <taxon>Cyanobacteriota</taxon>
        <taxon>Cyanophyceae</taxon>
        <taxon>Synechococcales</taxon>
        <taxon>Prochlorococcaceae</taxon>
        <taxon>Prochlorococcus</taxon>
    </lineage>
</organism>
<gene>
    <name evidence="1" type="primary">ureA</name>
</gene>
<reference key="1">
    <citation type="journal article" date="2000" name="Microbiology">
        <title>Prochlorococcus marinus strain PCC 9511, a picoplanktonic cyanobacterium, synthesizes the smallest urease.</title>
        <authorList>
            <person name="Palinska K.A."/>
            <person name="Jahns T."/>
            <person name="Rippka R."/>
            <person name="Tandeau de Marsac N."/>
        </authorList>
    </citation>
    <scope>NUCLEOTIDE SEQUENCE [GENOMIC DNA]</scope>
    <scope>CATALYTIC ACTIVITY</scope>
    <scope>ACTIVITY REGULATION</scope>
    <scope>SUBUNIT</scope>
    <scope>BIOPHYSICOCHEMICAL PROPERTIES</scope>
</reference>
<accession>Q9L642</accession>
<feature type="chain" id="PRO_0000098026" description="Urease subunit gamma">
    <location>
        <begin position="1"/>
        <end position="100"/>
    </location>
</feature>
<protein>
    <recommendedName>
        <fullName evidence="1">Urease subunit gamma</fullName>
        <ecNumber evidence="1">3.5.1.5</ecNumber>
    </recommendedName>
    <alternativeName>
        <fullName evidence="1">Urea amidohydrolase subunit gamma</fullName>
    </alternativeName>
</protein>